<organism>
    <name type="scientific">Aspergillus flavus (strain ATCC 200026 / FGSC A1120 / IAM 13836 / NRRL 3357 / JCM 12722 / SRRC 167)</name>
    <dbReference type="NCBI Taxonomy" id="332952"/>
    <lineage>
        <taxon>Eukaryota</taxon>
        <taxon>Fungi</taxon>
        <taxon>Dikarya</taxon>
        <taxon>Ascomycota</taxon>
        <taxon>Pezizomycotina</taxon>
        <taxon>Eurotiomycetes</taxon>
        <taxon>Eurotiomycetidae</taxon>
        <taxon>Eurotiales</taxon>
        <taxon>Aspergillaceae</taxon>
        <taxon>Aspergillus</taxon>
        <taxon>Aspergillus subgen. Circumdati</taxon>
    </lineage>
</organism>
<accession>B8NJL4</accession>
<evidence type="ECO:0000255" key="1">
    <source>
        <dbReference type="HAMAP-Rule" id="MF_03109"/>
    </source>
</evidence>
<evidence type="ECO:0000255" key="2">
    <source>
        <dbReference type="PROSITE-ProRule" id="PRU01052"/>
    </source>
</evidence>
<evidence type="ECO:0000256" key="3">
    <source>
        <dbReference type="SAM" id="MobiDB-lite"/>
    </source>
</evidence>
<dbReference type="EC" id="3.6.5.-" evidence="1"/>
<dbReference type="EMBL" id="EQ963479">
    <property type="protein sequence ID" value="EED49913.1"/>
    <property type="molecule type" value="Genomic_DNA"/>
</dbReference>
<dbReference type="RefSeq" id="XP_002380294.1">
    <property type="nucleotide sequence ID" value="XM_002380253.1"/>
</dbReference>
<dbReference type="SMR" id="B8NJL4"/>
<dbReference type="STRING" id="332952.B8NJL4"/>
<dbReference type="EnsemblFungi" id="EED49913">
    <property type="protein sequence ID" value="EED49913"/>
    <property type="gene ID" value="AFLA_067350"/>
</dbReference>
<dbReference type="VEuPathDB" id="FungiDB:AFLA_008671"/>
<dbReference type="eggNOG" id="KOG2203">
    <property type="taxonomic scope" value="Eukaryota"/>
</dbReference>
<dbReference type="HOGENOM" id="CLU_011270_0_0_1"/>
<dbReference type="OMA" id="PIIKMTE"/>
<dbReference type="GO" id="GO:0005789">
    <property type="term" value="C:endoplasmic reticulum membrane"/>
    <property type="evidence" value="ECO:0007669"/>
    <property type="project" value="UniProtKB-SubCell"/>
</dbReference>
<dbReference type="GO" id="GO:0005525">
    <property type="term" value="F:GTP binding"/>
    <property type="evidence" value="ECO:0007669"/>
    <property type="project" value="UniProtKB-UniRule"/>
</dbReference>
<dbReference type="GO" id="GO:0003924">
    <property type="term" value="F:GTPase activity"/>
    <property type="evidence" value="ECO:0007669"/>
    <property type="project" value="UniProtKB-UniRule"/>
</dbReference>
<dbReference type="GO" id="GO:0016320">
    <property type="term" value="P:endoplasmic reticulum membrane fusion"/>
    <property type="evidence" value="ECO:0007669"/>
    <property type="project" value="TreeGrafter"/>
</dbReference>
<dbReference type="CDD" id="cd01851">
    <property type="entry name" value="GBP"/>
    <property type="match status" value="1"/>
</dbReference>
<dbReference type="FunFam" id="3.40.50.300:FF:000727">
    <property type="entry name" value="Protein SEY1 homolog"/>
    <property type="match status" value="1"/>
</dbReference>
<dbReference type="Gene3D" id="3.40.50.300">
    <property type="entry name" value="P-loop containing nucleotide triphosphate hydrolases"/>
    <property type="match status" value="1"/>
</dbReference>
<dbReference type="HAMAP" id="MF_03109">
    <property type="entry name" value="Sey1"/>
    <property type="match status" value="1"/>
</dbReference>
<dbReference type="InterPro" id="IPR030386">
    <property type="entry name" value="G_GB1_RHD3_dom"/>
</dbReference>
<dbReference type="InterPro" id="IPR027417">
    <property type="entry name" value="P-loop_NTPase"/>
</dbReference>
<dbReference type="InterPro" id="IPR008803">
    <property type="entry name" value="RHD3/Sey1"/>
</dbReference>
<dbReference type="InterPro" id="IPR046758">
    <property type="entry name" value="Sey1/RHD3-like_3HB"/>
</dbReference>
<dbReference type="PANTHER" id="PTHR45923">
    <property type="entry name" value="PROTEIN SEY1"/>
    <property type="match status" value="1"/>
</dbReference>
<dbReference type="PANTHER" id="PTHR45923:SF2">
    <property type="entry name" value="PROTEIN SEY1"/>
    <property type="match status" value="1"/>
</dbReference>
<dbReference type="Pfam" id="PF05879">
    <property type="entry name" value="RHD3_GTPase"/>
    <property type="match status" value="1"/>
</dbReference>
<dbReference type="Pfam" id="PF20428">
    <property type="entry name" value="Sey1_3HB"/>
    <property type="match status" value="1"/>
</dbReference>
<dbReference type="SUPFAM" id="SSF52540">
    <property type="entry name" value="P-loop containing nucleoside triphosphate hydrolases"/>
    <property type="match status" value="1"/>
</dbReference>
<dbReference type="PROSITE" id="PS51715">
    <property type="entry name" value="G_GB1_RHD3"/>
    <property type="match status" value="1"/>
</dbReference>
<comment type="function">
    <text evidence="1">Cooperates with the reticulon proteins and tubule-shaping DP1 family proteins to generate and maintain the structure of the tubular endoplasmic reticulum network. Has GTPase activity, which is required for its function in ER organization.</text>
</comment>
<comment type="subcellular location">
    <subcellularLocation>
        <location evidence="1">Endoplasmic reticulum membrane</location>
        <topology evidence="1">Multi-pass membrane protein</topology>
    </subcellularLocation>
    <text evidence="1">Enriched in the cortical ER. Concentrated in punctae along the ER tubules.</text>
</comment>
<comment type="similarity">
    <text evidence="2">Belongs to the TRAFAC class dynamin-like GTPase superfamily. GB1/RHD3 GTPase family. RHD3 subfamily.</text>
</comment>
<sequence>MATNGHFASIGNSASDTTAYEHGVQVIDENKEFNPNLSQYLSLENVTPSGFNYHLISVFGSQSTGKSTLLNHLFGTHFSVMSELERRQTTKGIWMSKNKNESSSMASNILVMDVEGTDGRERGEDQDFERKSALFALATSEVLIVNIWEHQVGLYQGANMGLLKTVFEVNLQLFLKDKNTTHRSLLFFVIRDYSGMTPLQNLQKTLMEDMARLWDSISKPGGLENSNVHDYFDFQFYGLPHKGYQPEKFVEETQKLSLRFCDGQRDPNLDARKGEFSDGGVFLPEYHRRIPADGFSRYAEGIWDQIVNNKDLDLPTQQELLAQFRCDEILREVMVAFDETIVPFEDKQSQAARLGEPEILGGLGAAMRSSRTKAVKAFESEASRYHKGVYQRKRAELESKADTRLKTLFQGQLNAAHKSGISEFSEAVTAAVKSGQKKGTGYDFAEIVNEEAKKAVDKFEEVARATVVDGTSWSDYKQELALYEKELAEVSARLRRDEMRRLASRVERWVQSRLGESVGLEFNALGSGRAGGGAPEKGDQPTEKKFWDRVWNVFVETVLDAERRFTDRASSFDASLEEVDVGLWRLRRKSWGVLRAKIDEEMIEGNLLLKLRENFEDKFRYDDAGVPRIWRPTDDIEGIYTRARESTLTLIPLLSKFRLDETSAPPPLDRWIGHTPSSATSADEEDLAPIGGVDEEEGKSLEEEMTIVSDAKRQELTVRFKKAADGVYVEAKRSAIGGMTQVPLYFYGLLLALGWNEIIAVLRNPAYFFLLFVCAVGAYITYQLNLWGPIIKMTEAASNQAVTEGKKRLREFLESSDTGRQAIAMSTPGGSGRGGEEHEMSRLNQQGKSAAADEDVDDL</sequence>
<proteinExistence type="inferred from homology"/>
<reference key="1">
    <citation type="journal article" date="2015" name="Genome Announc.">
        <title>Genome sequence of Aspergillus flavus NRRL 3357, a strain that causes aflatoxin contamination of food and feed.</title>
        <authorList>
            <person name="Nierman W.C."/>
            <person name="Yu J."/>
            <person name="Fedorova-Abrams N.D."/>
            <person name="Losada L."/>
            <person name="Cleveland T.E."/>
            <person name="Bhatnagar D."/>
            <person name="Bennett J.W."/>
            <person name="Dean R."/>
            <person name="Payne G.A."/>
        </authorList>
    </citation>
    <scope>NUCLEOTIDE SEQUENCE [LARGE SCALE GENOMIC DNA]</scope>
    <source>
        <strain>ATCC 200026 / FGSC A1120 / IAM 13836 / NRRL 3357 / JCM 12722 / SRRC 167</strain>
    </source>
</reference>
<gene>
    <name type="primary">sey1</name>
    <name type="ORF">AFLA_067350</name>
</gene>
<keyword id="KW-0175">Coiled coil</keyword>
<keyword id="KW-0256">Endoplasmic reticulum</keyword>
<keyword id="KW-0342">GTP-binding</keyword>
<keyword id="KW-0378">Hydrolase</keyword>
<keyword id="KW-0472">Membrane</keyword>
<keyword id="KW-0547">Nucleotide-binding</keyword>
<keyword id="KW-0812">Transmembrane</keyword>
<keyword id="KW-1133">Transmembrane helix</keyword>
<feature type="chain" id="PRO_0000384970" description="Protein sey1">
    <location>
        <begin position="1"/>
        <end position="859"/>
    </location>
</feature>
<feature type="topological domain" description="Cytoplasmic" evidence="1">
    <location>
        <begin position="1"/>
        <end position="741"/>
    </location>
</feature>
<feature type="transmembrane region" description="Helical" evidence="1">
    <location>
        <begin position="742"/>
        <end position="762"/>
    </location>
</feature>
<feature type="topological domain" description="Lumenal" evidence="1">
    <location>
        <begin position="763"/>
        <end position="765"/>
    </location>
</feature>
<feature type="transmembrane region" description="Helical" evidence="1">
    <location>
        <begin position="766"/>
        <end position="786"/>
    </location>
</feature>
<feature type="topological domain" description="Cytoplasmic" evidence="1">
    <location>
        <begin position="787"/>
        <end position="859"/>
    </location>
</feature>
<feature type="domain" description="GB1/RHD3-type G" evidence="2">
    <location>
        <begin position="50"/>
        <end position="299"/>
    </location>
</feature>
<feature type="region of interest" description="Disordered" evidence="3">
    <location>
        <begin position="817"/>
        <end position="859"/>
    </location>
</feature>
<feature type="coiled-coil region" evidence="1">
    <location>
        <begin position="442"/>
        <end position="500"/>
    </location>
</feature>
<feature type="binding site" evidence="1">
    <location>
        <begin position="60"/>
        <end position="67"/>
    </location>
    <ligand>
        <name>GTP</name>
        <dbReference type="ChEBI" id="CHEBI:37565"/>
    </ligand>
</feature>
<protein>
    <recommendedName>
        <fullName evidence="1">Protein sey1</fullName>
        <ecNumber evidence="1">3.6.5.-</ecNumber>
    </recommendedName>
</protein>
<name>SEY1_ASPFN</name>